<reference key="1">
    <citation type="journal article" date="2001" name="Microb. Drug Resist.">
        <title>Annotated draft genomic sequence from a Streptococcus pneumoniae type 19F clinical isolate.</title>
        <authorList>
            <person name="Dopazo J."/>
            <person name="Mendoza A."/>
            <person name="Herrero J."/>
            <person name="Caldara F."/>
            <person name="Humbert Y."/>
            <person name="Friedli L."/>
            <person name="Guerrier M."/>
            <person name="Grand-Schenk E."/>
            <person name="Gandin C."/>
            <person name="de Francesco M."/>
            <person name="Polissi A."/>
            <person name="Buell G."/>
            <person name="Feger G."/>
            <person name="Garcia E."/>
            <person name="Peitsch M."/>
            <person name="Garcia-Bustos J.F."/>
        </authorList>
    </citation>
    <scope>NUCLEOTIDE SEQUENCE [LARGE SCALE GENOMIC DNA]</scope>
    <source>
        <strain>G54</strain>
    </source>
</reference>
<reference key="2">
    <citation type="submission" date="2008-03" db="EMBL/GenBank/DDBJ databases">
        <title>Pneumococcal beta glucoside metabolism investigated by whole genome comparison.</title>
        <authorList>
            <person name="Mulas L."/>
            <person name="Trappetti C."/>
            <person name="Hakenbeck R."/>
            <person name="Iannelli F."/>
            <person name="Pozzi G."/>
            <person name="Davidsen T.M."/>
            <person name="Tettelin H."/>
            <person name="Oggioni M."/>
        </authorList>
    </citation>
    <scope>NUCLEOTIDE SEQUENCE [LARGE SCALE GENOMIC DNA]</scope>
    <source>
        <strain>G54</strain>
    </source>
</reference>
<comment type="similarity">
    <text evidence="1">Belongs to the UPF0346 family.</text>
</comment>
<name>Y874_STRP4</name>
<proteinExistence type="inferred from homology"/>
<organism>
    <name type="scientific">Streptococcus pneumoniae serotype 19F (strain G54)</name>
    <dbReference type="NCBI Taxonomy" id="512566"/>
    <lineage>
        <taxon>Bacteria</taxon>
        <taxon>Bacillati</taxon>
        <taxon>Bacillota</taxon>
        <taxon>Bacilli</taxon>
        <taxon>Lactobacillales</taxon>
        <taxon>Streptococcaceae</taxon>
        <taxon>Streptococcus</taxon>
    </lineage>
</organism>
<gene>
    <name type="ordered locus">SPG_0874</name>
</gene>
<sequence length="71" mass="8451">MRKSFYTWLMTERNPKSNSPKAILADLAFEESAFPKHTDDFDEVSRFLEEHASFSFNLGDFDSIWQEYLEH</sequence>
<protein>
    <recommendedName>
        <fullName evidence="1">UPF0346 protein SPG_0874</fullName>
    </recommendedName>
</protein>
<feature type="chain" id="PRO_1000198693" description="UPF0346 protein SPG_0874">
    <location>
        <begin position="1"/>
        <end position="71"/>
    </location>
</feature>
<dbReference type="EMBL" id="CP001015">
    <property type="protein sequence ID" value="ACF56370.1"/>
    <property type="molecule type" value="Genomic_DNA"/>
</dbReference>
<dbReference type="SMR" id="B5E469"/>
<dbReference type="KEGG" id="spx:SPG_0874"/>
<dbReference type="HOGENOM" id="CLU_177534_1_0_9"/>
<dbReference type="Gene3D" id="1.10.150.260">
    <property type="entry name" value="YozE SAM-like"/>
    <property type="match status" value="1"/>
</dbReference>
<dbReference type="HAMAP" id="MF_01538">
    <property type="entry name" value="UPF0346"/>
    <property type="match status" value="1"/>
</dbReference>
<dbReference type="InterPro" id="IPR010673">
    <property type="entry name" value="UPF0346"/>
</dbReference>
<dbReference type="InterPro" id="IPR023089">
    <property type="entry name" value="YozE_SAM-like"/>
</dbReference>
<dbReference type="InterPro" id="IPR036806">
    <property type="entry name" value="YozE_SAM-like_sf"/>
</dbReference>
<dbReference type="NCBIfam" id="NF010193">
    <property type="entry name" value="PRK13672.1"/>
    <property type="match status" value="1"/>
</dbReference>
<dbReference type="Pfam" id="PF06855">
    <property type="entry name" value="YozE_SAM_like"/>
    <property type="match status" value="1"/>
</dbReference>
<dbReference type="PIRSF" id="PIRSF037262">
    <property type="entry name" value="UCP037262"/>
    <property type="match status" value="1"/>
</dbReference>
<dbReference type="SUPFAM" id="SSF140652">
    <property type="entry name" value="YozE-like"/>
    <property type="match status" value="1"/>
</dbReference>
<evidence type="ECO:0000255" key="1">
    <source>
        <dbReference type="HAMAP-Rule" id="MF_01538"/>
    </source>
</evidence>
<accession>B5E469</accession>